<protein>
    <recommendedName>
        <fullName evidence="1">5'-nucleotidase SurE</fullName>
        <ecNumber evidence="1">3.1.3.5</ecNumber>
    </recommendedName>
    <alternativeName>
        <fullName evidence="1">Nucleoside 5'-monophosphate phosphohydrolase</fullName>
    </alternativeName>
</protein>
<keyword id="KW-0963">Cytoplasm</keyword>
<keyword id="KW-0378">Hydrolase</keyword>
<keyword id="KW-0479">Metal-binding</keyword>
<keyword id="KW-0547">Nucleotide-binding</keyword>
<feature type="chain" id="PRO_1000075021" description="5'-nucleotidase SurE">
    <location>
        <begin position="1"/>
        <end position="253"/>
    </location>
</feature>
<feature type="binding site" evidence="1">
    <location>
        <position position="8"/>
    </location>
    <ligand>
        <name>a divalent metal cation</name>
        <dbReference type="ChEBI" id="CHEBI:60240"/>
    </ligand>
</feature>
<feature type="binding site" evidence="1">
    <location>
        <position position="9"/>
    </location>
    <ligand>
        <name>a divalent metal cation</name>
        <dbReference type="ChEBI" id="CHEBI:60240"/>
    </ligand>
</feature>
<feature type="binding site" evidence="1">
    <location>
        <position position="39"/>
    </location>
    <ligand>
        <name>a divalent metal cation</name>
        <dbReference type="ChEBI" id="CHEBI:60240"/>
    </ligand>
</feature>
<feature type="binding site" evidence="1">
    <location>
        <position position="95"/>
    </location>
    <ligand>
        <name>a divalent metal cation</name>
        <dbReference type="ChEBI" id="CHEBI:60240"/>
    </ligand>
</feature>
<sequence length="253" mass="27948">MNILITNDDGINAPGIIALAKEISKEHKVTIVAPKDQKSASSHSISIHSPIKIKEEFIEGLDCKAYSVSGTPADCTQVGLSFLKENIELVISGINKGPNVGTDILYSGTVSAAIEGTIYGIPSIAVSMDVEYGKDDEDYSKAVKWAIKVLDIAKEEYLKSDVVLNLNIPNFNERDIKGIKVCKIGRSTYKTEYILLESNEEGDLYTTKGTRNAIKEEESDLYYLYQGYVTLTPLHFDFTDFAILSDVTKIFEK</sequence>
<name>SURE_CLOB8</name>
<gene>
    <name evidence="1" type="primary">surE</name>
    <name type="ordered locus">Cbei_1007</name>
</gene>
<dbReference type="EC" id="3.1.3.5" evidence="1"/>
<dbReference type="EMBL" id="CP000721">
    <property type="protein sequence ID" value="ABR33191.1"/>
    <property type="molecule type" value="Genomic_DNA"/>
</dbReference>
<dbReference type="RefSeq" id="WP_011968350.1">
    <property type="nucleotide sequence ID" value="NC_009617.1"/>
</dbReference>
<dbReference type="SMR" id="A6LS61"/>
<dbReference type="GeneID" id="66343940"/>
<dbReference type="KEGG" id="cbe:Cbei_1007"/>
<dbReference type="eggNOG" id="COG0496">
    <property type="taxonomic scope" value="Bacteria"/>
</dbReference>
<dbReference type="HOGENOM" id="CLU_045192_1_3_9"/>
<dbReference type="Proteomes" id="UP000000565">
    <property type="component" value="Chromosome"/>
</dbReference>
<dbReference type="GO" id="GO:0005737">
    <property type="term" value="C:cytoplasm"/>
    <property type="evidence" value="ECO:0007669"/>
    <property type="project" value="UniProtKB-SubCell"/>
</dbReference>
<dbReference type="GO" id="GO:0008254">
    <property type="term" value="F:3'-nucleotidase activity"/>
    <property type="evidence" value="ECO:0007669"/>
    <property type="project" value="TreeGrafter"/>
</dbReference>
<dbReference type="GO" id="GO:0008253">
    <property type="term" value="F:5'-nucleotidase activity"/>
    <property type="evidence" value="ECO:0007669"/>
    <property type="project" value="UniProtKB-UniRule"/>
</dbReference>
<dbReference type="GO" id="GO:0004309">
    <property type="term" value="F:exopolyphosphatase activity"/>
    <property type="evidence" value="ECO:0007669"/>
    <property type="project" value="TreeGrafter"/>
</dbReference>
<dbReference type="GO" id="GO:0046872">
    <property type="term" value="F:metal ion binding"/>
    <property type="evidence" value="ECO:0007669"/>
    <property type="project" value="UniProtKB-UniRule"/>
</dbReference>
<dbReference type="GO" id="GO:0000166">
    <property type="term" value="F:nucleotide binding"/>
    <property type="evidence" value="ECO:0007669"/>
    <property type="project" value="UniProtKB-KW"/>
</dbReference>
<dbReference type="Gene3D" id="3.40.1210.10">
    <property type="entry name" value="Survival protein SurE-like phosphatase/nucleotidase"/>
    <property type="match status" value="1"/>
</dbReference>
<dbReference type="HAMAP" id="MF_00060">
    <property type="entry name" value="SurE"/>
    <property type="match status" value="1"/>
</dbReference>
<dbReference type="InterPro" id="IPR030048">
    <property type="entry name" value="SurE"/>
</dbReference>
<dbReference type="InterPro" id="IPR002828">
    <property type="entry name" value="SurE-like_Pase/nucleotidase"/>
</dbReference>
<dbReference type="InterPro" id="IPR036523">
    <property type="entry name" value="SurE-like_sf"/>
</dbReference>
<dbReference type="NCBIfam" id="NF010543">
    <property type="entry name" value="PRK13933.1"/>
    <property type="match status" value="1"/>
</dbReference>
<dbReference type="NCBIfam" id="TIGR00087">
    <property type="entry name" value="surE"/>
    <property type="match status" value="1"/>
</dbReference>
<dbReference type="PANTHER" id="PTHR30457">
    <property type="entry name" value="5'-NUCLEOTIDASE SURE"/>
    <property type="match status" value="1"/>
</dbReference>
<dbReference type="PANTHER" id="PTHR30457:SF12">
    <property type="entry name" value="5'_3'-NUCLEOTIDASE SURE"/>
    <property type="match status" value="1"/>
</dbReference>
<dbReference type="Pfam" id="PF01975">
    <property type="entry name" value="SurE"/>
    <property type="match status" value="1"/>
</dbReference>
<dbReference type="SUPFAM" id="SSF64167">
    <property type="entry name" value="SurE-like"/>
    <property type="match status" value="1"/>
</dbReference>
<accession>A6LS61</accession>
<comment type="function">
    <text evidence="1">Nucleotidase that shows phosphatase activity on nucleoside 5'-monophosphates.</text>
</comment>
<comment type="catalytic activity">
    <reaction evidence="1">
        <text>a ribonucleoside 5'-phosphate + H2O = a ribonucleoside + phosphate</text>
        <dbReference type="Rhea" id="RHEA:12484"/>
        <dbReference type="ChEBI" id="CHEBI:15377"/>
        <dbReference type="ChEBI" id="CHEBI:18254"/>
        <dbReference type="ChEBI" id="CHEBI:43474"/>
        <dbReference type="ChEBI" id="CHEBI:58043"/>
        <dbReference type="EC" id="3.1.3.5"/>
    </reaction>
</comment>
<comment type="cofactor">
    <cofactor evidence="1">
        <name>a divalent metal cation</name>
        <dbReference type="ChEBI" id="CHEBI:60240"/>
    </cofactor>
    <text evidence="1">Binds 1 divalent metal cation per subunit.</text>
</comment>
<comment type="subcellular location">
    <subcellularLocation>
        <location evidence="1">Cytoplasm</location>
    </subcellularLocation>
</comment>
<comment type="similarity">
    <text evidence="1">Belongs to the SurE nucleotidase family.</text>
</comment>
<organism>
    <name type="scientific">Clostridium beijerinckii (strain ATCC 51743 / NCIMB 8052)</name>
    <name type="common">Clostridium acetobutylicum</name>
    <dbReference type="NCBI Taxonomy" id="290402"/>
    <lineage>
        <taxon>Bacteria</taxon>
        <taxon>Bacillati</taxon>
        <taxon>Bacillota</taxon>
        <taxon>Clostridia</taxon>
        <taxon>Eubacteriales</taxon>
        <taxon>Clostridiaceae</taxon>
        <taxon>Clostridium</taxon>
    </lineage>
</organism>
<evidence type="ECO:0000255" key="1">
    <source>
        <dbReference type="HAMAP-Rule" id="MF_00060"/>
    </source>
</evidence>
<proteinExistence type="inferred from homology"/>
<reference key="1">
    <citation type="submission" date="2007-06" db="EMBL/GenBank/DDBJ databases">
        <title>Complete sequence of Clostridium beijerinckii NCIMB 8052.</title>
        <authorList>
            <consortium name="US DOE Joint Genome Institute"/>
            <person name="Copeland A."/>
            <person name="Lucas S."/>
            <person name="Lapidus A."/>
            <person name="Barry K."/>
            <person name="Detter J.C."/>
            <person name="Glavina del Rio T."/>
            <person name="Hammon N."/>
            <person name="Israni S."/>
            <person name="Dalin E."/>
            <person name="Tice H."/>
            <person name="Pitluck S."/>
            <person name="Sims D."/>
            <person name="Brettin T."/>
            <person name="Bruce D."/>
            <person name="Tapia R."/>
            <person name="Brainard J."/>
            <person name="Schmutz J."/>
            <person name="Larimer F."/>
            <person name="Land M."/>
            <person name="Hauser L."/>
            <person name="Kyrpides N."/>
            <person name="Mikhailova N."/>
            <person name="Bennet G."/>
            <person name="Cann I."/>
            <person name="Chen J.-S."/>
            <person name="Contreras A.L."/>
            <person name="Jones D."/>
            <person name="Kashket E."/>
            <person name="Mitchell W."/>
            <person name="Stoddard S."/>
            <person name="Schwarz W."/>
            <person name="Qureshi N."/>
            <person name="Young M."/>
            <person name="Shi Z."/>
            <person name="Ezeji T."/>
            <person name="White B."/>
            <person name="Blaschek H."/>
            <person name="Richardson P."/>
        </authorList>
    </citation>
    <scope>NUCLEOTIDE SEQUENCE [LARGE SCALE GENOMIC DNA]</scope>
    <source>
        <strain>ATCC 51743 / NCIMB 8052</strain>
    </source>
</reference>